<protein>
    <recommendedName>
        <fullName>Fibrosin-1-like protein</fullName>
    </recommendedName>
    <alternativeName>
        <fullName>AUTS2-like protein</fullName>
    </alternativeName>
    <alternativeName>
        <fullName>HBV X-transactivated gene 9 protein</fullName>
    </alternativeName>
    <alternativeName>
        <fullName>HBV XAg-transactivated protein 9</fullName>
    </alternativeName>
</protein>
<dbReference type="EMBL" id="AC079031">
    <property type="status" value="NOT_ANNOTATED_CDS"/>
    <property type="molecule type" value="Genomic_DNA"/>
</dbReference>
<dbReference type="EMBL" id="AC131212">
    <property type="status" value="NOT_ANNOTATED_CDS"/>
    <property type="molecule type" value="Genomic_DNA"/>
</dbReference>
<dbReference type="EMBL" id="CH471218">
    <property type="protein sequence ID" value="EAW54843.1"/>
    <property type="status" value="ALT_SEQ"/>
    <property type="molecule type" value="Genomic_DNA"/>
</dbReference>
<dbReference type="EMBL" id="AB046765">
    <property type="protein sequence ID" value="BAB13371.2"/>
    <property type="molecule type" value="mRNA"/>
</dbReference>
<dbReference type="EMBL" id="AF490258">
    <property type="protein sequence ID" value="AAO85466.1"/>
    <property type="molecule type" value="mRNA"/>
</dbReference>
<dbReference type="CCDS" id="CCDS45010.1"/>
<dbReference type="RefSeq" id="NP_001136113.1">
    <property type="nucleotide sequence ID" value="NM_001142641.2"/>
</dbReference>
<dbReference type="BioGRID" id="121699">
    <property type="interactions" value="62"/>
</dbReference>
<dbReference type="CORUM" id="Q9HCM7"/>
<dbReference type="FunCoup" id="Q9HCM7">
    <property type="interactions" value="501"/>
</dbReference>
<dbReference type="IntAct" id="Q9HCM7">
    <property type="interactions" value="40"/>
</dbReference>
<dbReference type="STRING" id="9606.ENSP00000396160"/>
<dbReference type="GlyGen" id="Q9HCM7">
    <property type="glycosylation" value="5 sites, 1 O-linked glycan (2 sites)"/>
</dbReference>
<dbReference type="iPTMnet" id="Q9HCM7"/>
<dbReference type="PhosphoSitePlus" id="Q9HCM7"/>
<dbReference type="BioMuta" id="FBRSL1"/>
<dbReference type="DMDM" id="317373568"/>
<dbReference type="jPOST" id="Q9HCM7"/>
<dbReference type="MassIVE" id="Q9HCM7"/>
<dbReference type="PaxDb" id="9606-ENSP00000396160"/>
<dbReference type="PeptideAtlas" id="Q9HCM7"/>
<dbReference type="ProteomicsDB" id="81767"/>
<dbReference type="Pumba" id="Q9HCM7"/>
<dbReference type="Antibodypedia" id="56621">
    <property type="antibodies" value="61 antibodies from 16 providers"/>
</dbReference>
<dbReference type="DNASU" id="57666"/>
<dbReference type="Ensembl" id="ENST00000434748.2">
    <property type="protein sequence ID" value="ENSP00000396160.2"/>
    <property type="gene ID" value="ENSG00000112787.14"/>
</dbReference>
<dbReference type="GeneID" id="57666"/>
<dbReference type="KEGG" id="hsa:57666"/>
<dbReference type="UCSC" id="uc001ukf.4">
    <property type="organism name" value="human"/>
</dbReference>
<dbReference type="AGR" id="HGNC:29308"/>
<dbReference type="CTD" id="57666"/>
<dbReference type="DisGeNET" id="57666"/>
<dbReference type="GeneCards" id="FBRSL1"/>
<dbReference type="HGNC" id="HGNC:29308">
    <property type="gene designation" value="FBRSL1"/>
</dbReference>
<dbReference type="HPA" id="ENSG00000112787">
    <property type="expression patterns" value="Low tissue specificity"/>
</dbReference>
<dbReference type="MIM" id="620123">
    <property type="type" value="gene"/>
</dbReference>
<dbReference type="neXtProt" id="NX_Q9HCM7"/>
<dbReference type="OpenTargets" id="ENSG00000112787"/>
<dbReference type="PharmGKB" id="PA164720011"/>
<dbReference type="VEuPathDB" id="HostDB:ENSG00000112787"/>
<dbReference type="eggNOG" id="ENOG502QSH4">
    <property type="taxonomic scope" value="Eukaryota"/>
</dbReference>
<dbReference type="GeneTree" id="ENSGT00940000160709"/>
<dbReference type="HOGENOM" id="CLU_007298_1_0_1"/>
<dbReference type="InParanoid" id="Q9HCM7"/>
<dbReference type="OMA" id="GLWQGKT"/>
<dbReference type="OrthoDB" id="10060000at2759"/>
<dbReference type="PAN-GO" id="Q9HCM7">
    <property type="GO annotations" value="0 GO annotations based on evolutionary models"/>
</dbReference>
<dbReference type="PhylomeDB" id="Q9HCM7"/>
<dbReference type="TreeFam" id="TF331929"/>
<dbReference type="PathwayCommons" id="Q9HCM7"/>
<dbReference type="SignaLink" id="Q9HCM7"/>
<dbReference type="BioGRID-ORCS" id="57666">
    <property type="hits" value="8 hits in 1151 CRISPR screens"/>
</dbReference>
<dbReference type="CD-CODE" id="232F8A39">
    <property type="entry name" value="P-body"/>
</dbReference>
<dbReference type="CD-CODE" id="DEE660B4">
    <property type="entry name" value="Stress granule"/>
</dbReference>
<dbReference type="ChiTaRS" id="FBRSL1">
    <property type="organism name" value="human"/>
</dbReference>
<dbReference type="GenomeRNAi" id="57666"/>
<dbReference type="Pharos" id="Q9HCM7">
    <property type="development level" value="Tdark"/>
</dbReference>
<dbReference type="PRO" id="PR:Q9HCM7"/>
<dbReference type="Proteomes" id="UP000005640">
    <property type="component" value="Chromosome 12"/>
</dbReference>
<dbReference type="RNAct" id="Q9HCM7">
    <property type="molecule type" value="protein"/>
</dbReference>
<dbReference type="Bgee" id="ENSG00000112787">
    <property type="expression patterns" value="Expressed in pancreatic ductal cell and 177 other cell types or tissues"/>
</dbReference>
<dbReference type="ExpressionAtlas" id="Q9HCM7">
    <property type="expression patterns" value="baseline and differential"/>
</dbReference>
<dbReference type="GO" id="GO:0003723">
    <property type="term" value="F:RNA binding"/>
    <property type="evidence" value="ECO:0007005"/>
    <property type="project" value="UniProtKB"/>
</dbReference>
<dbReference type="InterPro" id="IPR023246">
    <property type="entry name" value="AUTS2"/>
</dbReference>
<dbReference type="PANTHER" id="PTHR14429">
    <property type="entry name" value="FIBROSIN FAMILY MEMBER"/>
    <property type="match status" value="1"/>
</dbReference>
<dbReference type="PANTHER" id="PTHR14429:SF20">
    <property type="entry name" value="FIBROSIN-1-LIKE PROTEIN"/>
    <property type="match status" value="1"/>
</dbReference>
<dbReference type="Pfam" id="PF15336">
    <property type="entry name" value="Auts2"/>
    <property type="match status" value="1"/>
</dbReference>
<dbReference type="PRINTS" id="PR02044">
    <property type="entry name" value="FIBROSIN1LPF"/>
</dbReference>
<name>FBSL_HUMAN</name>
<sequence length="1045" mass="110907">MEAKVRPSRRSRAQRDRGRRREAARDARAQSPSSGDEPEPSPGKENAGLRGAPPRGAAPAPRTARPPRRRRRESSSQEEEVIDGFAIASFSTLEALEKDMALKPHERKEKWERRLIKKPRESETCPPAEPSENRRPLEAGSPGQDLEPACDGARKVPLQPSKQMKVTVSKGGDRDSDDDSVLEATSSRDPLSDSSAHAVSGRGYSCDSESGPDDKASVGSEKLFAPGTDKGPALEKSEAKAGPVPKVSGLERSRELSAESFLPTASPAPHAAPCPGPPPGSRANPLVKKEPPAPHRHTPQPPPPQPRGLLPTHVPASLGAFAGHSQAAANGLHGLSRSSSAPLGLGKHVSLSPHGPGPHLSTSHLALRSQAQHQLHAAMFAAPPTLPPPPALPASSLVLPGHPADHELLRQELNTRFLVQSAERPGASLGPGALLRAEFHQHQHTHQHTHQHTHQHQHTFAPFPAGLPPTPPAAPPPFDKYAPKLDSPYFRHSSVSFFPSFPPAIPGLPTLLPHPGPFGSLQGAFQPKVSDPYRAVVKVSTCWEGPWQGRTLVPPGRPRGARDSRSLQKTWVGVAPAPLSASILSQKPGRWCAVHVQIAWQIYRHQQKIKEMQLDPHKLEVGAKLDLFGRPPAPGVFAGFHYPQDLARPLFPSTGAAHPASNPFGPSAHPGSFLPTGPLTDPFSRPSTFGGLGSLSSHAFGGLGSHALAPGGSIFAPKEGSSVHGLPSPHEAWNRLHRAPPSFPAPPPWPKSVDAERVSALTNHDREPDNGKEEQERDLLEKTRLLSRASPATPAGHPVSGLLLRAQSELGRSGAPAEREAEPRVKESRSPAKEEAAKMPARASPPHSKAAPGDVKVKEERGEDEASEPPAGGLHPAPLQLGLGRERLGAPGFAWEPFRGLELPRRAFPAAAPAPGSAALLEPPERPYRDREPHGYSPERLRGELERARAPHLPPAAPALDGALLPSLGALHFPRLSPAALHNGLLARTPPAAAALGAPPPLVTAAGPPTPPGPPRSRTTPLGGLGPGEARDYSPSRNPPEVEAR</sequence>
<organism>
    <name type="scientific">Homo sapiens</name>
    <name type="common">Human</name>
    <dbReference type="NCBI Taxonomy" id="9606"/>
    <lineage>
        <taxon>Eukaryota</taxon>
        <taxon>Metazoa</taxon>
        <taxon>Chordata</taxon>
        <taxon>Craniata</taxon>
        <taxon>Vertebrata</taxon>
        <taxon>Euteleostomi</taxon>
        <taxon>Mammalia</taxon>
        <taxon>Eutheria</taxon>
        <taxon>Euarchontoglires</taxon>
        <taxon>Primates</taxon>
        <taxon>Haplorrhini</taxon>
        <taxon>Catarrhini</taxon>
        <taxon>Hominidae</taxon>
        <taxon>Homo</taxon>
    </lineage>
</organism>
<proteinExistence type="evidence at protein level"/>
<reference key="1">
    <citation type="journal article" date="2006" name="Nature">
        <title>The finished DNA sequence of human chromosome 12.</title>
        <authorList>
            <person name="Scherer S.E."/>
            <person name="Muzny D.M."/>
            <person name="Buhay C.J."/>
            <person name="Chen R."/>
            <person name="Cree A."/>
            <person name="Ding Y."/>
            <person name="Dugan-Rocha S."/>
            <person name="Gill R."/>
            <person name="Gunaratne P."/>
            <person name="Harris R.A."/>
            <person name="Hawes A.C."/>
            <person name="Hernandez J."/>
            <person name="Hodgson A.V."/>
            <person name="Hume J."/>
            <person name="Jackson A."/>
            <person name="Khan Z.M."/>
            <person name="Kovar-Smith C."/>
            <person name="Lewis L.R."/>
            <person name="Lozado R.J."/>
            <person name="Metzker M.L."/>
            <person name="Milosavljevic A."/>
            <person name="Miner G.R."/>
            <person name="Montgomery K.T."/>
            <person name="Morgan M.B."/>
            <person name="Nazareth L.V."/>
            <person name="Scott G."/>
            <person name="Sodergren E."/>
            <person name="Song X.-Z."/>
            <person name="Steffen D."/>
            <person name="Lovering R.C."/>
            <person name="Wheeler D.A."/>
            <person name="Worley K.C."/>
            <person name="Yuan Y."/>
            <person name="Zhang Z."/>
            <person name="Adams C.Q."/>
            <person name="Ansari-Lari M.A."/>
            <person name="Ayele M."/>
            <person name="Brown M.J."/>
            <person name="Chen G."/>
            <person name="Chen Z."/>
            <person name="Clerc-Blankenburg K.P."/>
            <person name="Davis C."/>
            <person name="Delgado O."/>
            <person name="Dinh H.H."/>
            <person name="Draper H."/>
            <person name="Gonzalez-Garay M.L."/>
            <person name="Havlak P."/>
            <person name="Jackson L.R."/>
            <person name="Jacob L.S."/>
            <person name="Kelly S.H."/>
            <person name="Li L."/>
            <person name="Li Z."/>
            <person name="Liu J."/>
            <person name="Liu W."/>
            <person name="Lu J."/>
            <person name="Maheshwari M."/>
            <person name="Nguyen B.-V."/>
            <person name="Okwuonu G.O."/>
            <person name="Pasternak S."/>
            <person name="Perez L.M."/>
            <person name="Plopper F.J.H."/>
            <person name="Santibanez J."/>
            <person name="Shen H."/>
            <person name="Tabor P.E."/>
            <person name="Verduzco D."/>
            <person name="Waldron L."/>
            <person name="Wang Q."/>
            <person name="Williams G.A."/>
            <person name="Zhang J."/>
            <person name="Zhou J."/>
            <person name="Allen C.C."/>
            <person name="Amin A.G."/>
            <person name="Anyalebechi V."/>
            <person name="Bailey M."/>
            <person name="Barbaria J.A."/>
            <person name="Bimage K.E."/>
            <person name="Bryant N.P."/>
            <person name="Burch P.E."/>
            <person name="Burkett C.E."/>
            <person name="Burrell K.L."/>
            <person name="Calderon E."/>
            <person name="Cardenas V."/>
            <person name="Carter K."/>
            <person name="Casias K."/>
            <person name="Cavazos I."/>
            <person name="Cavazos S.R."/>
            <person name="Ceasar H."/>
            <person name="Chacko J."/>
            <person name="Chan S.N."/>
            <person name="Chavez D."/>
            <person name="Christopoulos C."/>
            <person name="Chu J."/>
            <person name="Cockrell R."/>
            <person name="Cox C.D."/>
            <person name="Dang M."/>
            <person name="Dathorne S.R."/>
            <person name="David R."/>
            <person name="Davis C.M."/>
            <person name="Davy-Carroll L."/>
            <person name="Deshazo D.R."/>
            <person name="Donlin J.E."/>
            <person name="D'Souza L."/>
            <person name="Eaves K.A."/>
            <person name="Egan A."/>
            <person name="Emery-Cohen A.J."/>
            <person name="Escotto M."/>
            <person name="Flagg N."/>
            <person name="Forbes L.D."/>
            <person name="Gabisi A.M."/>
            <person name="Garza M."/>
            <person name="Hamilton C."/>
            <person name="Henderson N."/>
            <person name="Hernandez O."/>
            <person name="Hines S."/>
            <person name="Hogues M.E."/>
            <person name="Huang M."/>
            <person name="Idlebird D.G."/>
            <person name="Johnson R."/>
            <person name="Jolivet A."/>
            <person name="Jones S."/>
            <person name="Kagan R."/>
            <person name="King L.M."/>
            <person name="Leal B."/>
            <person name="Lebow H."/>
            <person name="Lee S."/>
            <person name="LeVan J.M."/>
            <person name="Lewis L.C."/>
            <person name="London P."/>
            <person name="Lorensuhewa L.M."/>
            <person name="Loulseged H."/>
            <person name="Lovett D.A."/>
            <person name="Lucier A."/>
            <person name="Lucier R.L."/>
            <person name="Ma J."/>
            <person name="Madu R.C."/>
            <person name="Mapua P."/>
            <person name="Martindale A.D."/>
            <person name="Martinez E."/>
            <person name="Massey E."/>
            <person name="Mawhiney S."/>
            <person name="Meador M.G."/>
            <person name="Mendez S."/>
            <person name="Mercado C."/>
            <person name="Mercado I.C."/>
            <person name="Merritt C.E."/>
            <person name="Miner Z.L."/>
            <person name="Minja E."/>
            <person name="Mitchell T."/>
            <person name="Mohabbat F."/>
            <person name="Mohabbat K."/>
            <person name="Montgomery B."/>
            <person name="Moore N."/>
            <person name="Morris S."/>
            <person name="Munidasa M."/>
            <person name="Ngo R.N."/>
            <person name="Nguyen N.B."/>
            <person name="Nickerson E."/>
            <person name="Nwaokelemeh O.O."/>
            <person name="Nwokenkwo S."/>
            <person name="Obregon M."/>
            <person name="Oguh M."/>
            <person name="Oragunye N."/>
            <person name="Oviedo R.J."/>
            <person name="Parish B.J."/>
            <person name="Parker D.N."/>
            <person name="Parrish J."/>
            <person name="Parks K.L."/>
            <person name="Paul H.A."/>
            <person name="Payton B.A."/>
            <person name="Perez A."/>
            <person name="Perrin W."/>
            <person name="Pickens A."/>
            <person name="Primus E.L."/>
            <person name="Pu L.-L."/>
            <person name="Puazo M."/>
            <person name="Quiles M.M."/>
            <person name="Quiroz J.B."/>
            <person name="Rabata D."/>
            <person name="Reeves K."/>
            <person name="Ruiz S.J."/>
            <person name="Shao H."/>
            <person name="Sisson I."/>
            <person name="Sonaike T."/>
            <person name="Sorelle R.P."/>
            <person name="Sutton A.E."/>
            <person name="Svatek A.F."/>
            <person name="Svetz L.A."/>
            <person name="Tamerisa K.S."/>
            <person name="Taylor T.R."/>
            <person name="Teague B."/>
            <person name="Thomas N."/>
            <person name="Thorn R.D."/>
            <person name="Trejos Z.Y."/>
            <person name="Trevino B.K."/>
            <person name="Ukegbu O.N."/>
            <person name="Urban J.B."/>
            <person name="Vasquez L.I."/>
            <person name="Vera V.A."/>
            <person name="Villasana D.M."/>
            <person name="Wang L."/>
            <person name="Ward-Moore S."/>
            <person name="Warren J.T."/>
            <person name="Wei X."/>
            <person name="White F."/>
            <person name="Williamson A.L."/>
            <person name="Wleczyk R."/>
            <person name="Wooden H.S."/>
            <person name="Wooden S.H."/>
            <person name="Yen J."/>
            <person name="Yoon L."/>
            <person name="Yoon V."/>
            <person name="Zorrilla S.E."/>
            <person name="Nelson D."/>
            <person name="Kucherlapati R."/>
            <person name="Weinstock G."/>
            <person name="Gibbs R.A."/>
        </authorList>
    </citation>
    <scope>NUCLEOTIDE SEQUENCE [LARGE SCALE GENOMIC DNA]</scope>
</reference>
<reference key="2">
    <citation type="submission" date="2005-09" db="EMBL/GenBank/DDBJ databases">
        <authorList>
            <person name="Mural R.J."/>
            <person name="Istrail S."/>
            <person name="Sutton G.G."/>
            <person name="Florea L."/>
            <person name="Halpern A.L."/>
            <person name="Mobarry C.M."/>
            <person name="Lippert R."/>
            <person name="Walenz B."/>
            <person name="Shatkay H."/>
            <person name="Dew I."/>
            <person name="Miller J.R."/>
            <person name="Flanigan M.J."/>
            <person name="Edwards N.J."/>
            <person name="Bolanos R."/>
            <person name="Fasulo D."/>
            <person name="Halldorsson B.V."/>
            <person name="Hannenhalli S."/>
            <person name="Turner R."/>
            <person name="Yooseph S."/>
            <person name="Lu F."/>
            <person name="Nusskern D.R."/>
            <person name="Shue B.C."/>
            <person name="Zheng X.H."/>
            <person name="Zhong F."/>
            <person name="Delcher A.L."/>
            <person name="Huson D.H."/>
            <person name="Kravitz S.A."/>
            <person name="Mouchard L."/>
            <person name="Reinert K."/>
            <person name="Remington K.A."/>
            <person name="Clark A.G."/>
            <person name="Waterman M.S."/>
            <person name="Eichler E.E."/>
            <person name="Adams M.D."/>
            <person name="Hunkapiller M.W."/>
            <person name="Myers E.W."/>
            <person name="Venter J.C."/>
        </authorList>
    </citation>
    <scope>NUCLEOTIDE SEQUENCE [LARGE SCALE GENOMIC DNA]</scope>
</reference>
<reference key="3">
    <citation type="journal article" date="2000" name="DNA Res.">
        <title>Prediction of the coding sequences of unidentified human genes. XVIII. The complete sequences of 100 new cDNA clones from brain which code for large proteins in vitro.</title>
        <authorList>
            <person name="Nagase T."/>
            <person name="Kikuno R."/>
            <person name="Nakayama M."/>
            <person name="Hirosawa M."/>
            <person name="Ohara O."/>
        </authorList>
    </citation>
    <scope>NUCLEOTIDE SEQUENCE [LARGE SCALE MRNA] OF 78-1045</scope>
    <source>
        <tissue>Brain</tissue>
    </source>
</reference>
<reference key="4">
    <citation type="journal article" date="2002" name="DNA Res.">
        <title>Construction of expression-ready cDNA clones for KIAA genes: manual curation of 330 KIAA cDNA clones.</title>
        <authorList>
            <person name="Nakajima D."/>
            <person name="Okazaki N."/>
            <person name="Yamakawa H."/>
            <person name="Kikuno R."/>
            <person name="Ohara O."/>
            <person name="Nagase T."/>
        </authorList>
    </citation>
    <scope>SEQUENCE REVISION</scope>
</reference>
<reference key="5">
    <citation type="submission" date="2002-03" db="EMBL/GenBank/DDBJ databases">
        <title>Cloning and identification of human gene 9 transactivated by hepatitis B virus X antigen.</title>
        <authorList>
            <person name="Liu Y."/>
            <person name="Cheng J."/>
            <person name="Lu Y."/>
            <person name="Wang G."/>
            <person name="Zhang L."/>
            <person name="Chen J."/>
            <person name="Li L."/>
        </authorList>
    </citation>
    <scope>NUCLEOTIDE SEQUENCE [MRNA] OF 379-1045</scope>
</reference>
<reference key="6">
    <citation type="journal article" date="2009" name="Anal. Chem.">
        <title>Lys-N and trypsin cover complementary parts of the phosphoproteome in a refined SCX-based approach.</title>
        <authorList>
            <person name="Gauci S."/>
            <person name="Helbig A.O."/>
            <person name="Slijper M."/>
            <person name="Krijgsveld J."/>
            <person name="Heck A.J."/>
            <person name="Mohammed S."/>
        </authorList>
    </citation>
    <scope>IDENTIFICATION BY MASS SPECTROMETRY [LARGE SCALE ANALYSIS]</scope>
</reference>
<reference key="7">
    <citation type="journal article" date="2009" name="Sci. Signal.">
        <title>Quantitative phosphoproteomic analysis of T cell receptor signaling reveals system-wide modulation of protein-protein interactions.</title>
        <authorList>
            <person name="Mayya V."/>
            <person name="Lundgren D.H."/>
            <person name="Hwang S.-I."/>
            <person name="Rezaul K."/>
            <person name="Wu L."/>
            <person name="Eng J.K."/>
            <person name="Rodionov V."/>
            <person name="Han D.K."/>
        </authorList>
    </citation>
    <scope>PHOSPHORYLATION [LARGE SCALE ANALYSIS] AT THR-989 AND THR-1010</scope>
    <scope>IDENTIFICATION BY MASS SPECTROMETRY [LARGE SCALE ANALYSIS]</scope>
    <source>
        <tissue>Leukemic T-cell</tissue>
    </source>
</reference>
<reference key="8">
    <citation type="journal article" date="2011" name="Sci. Signal.">
        <title>System-wide temporal characterization of the proteome and phosphoproteome of human embryonic stem cell differentiation.</title>
        <authorList>
            <person name="Rigbolt K.T."/>
            <person name="Prokhorova T.A."/>
            <person name="Akimov V."/>
            <person name="Henningsen J."/>
            <person name="Johansen P.T."/>
            <person name="Kratchmarova I."/>
            <person name="Kassem M."/>
            <person name="Mann M."/>
            <person name="Olsen J.V."/>
            <person name="Blagoev B."/>
        </authorList>
    </citation>
    <scope>PHOSPHORYLATION [LARGE SCALE ANALYSIS] AT SER-937</scope>
    <scope>IDENTIFICATION BY MASS SPECTROMETRY [LARGE SCALE ANALYSIS]</scope>
</reference>
<reference key="9">
    <citation type="journal article" date="2013" name="J. Proteome Res.">
        <title>Toward a comprehensive characterization of a human cancer cell phosphoproteome.</title>
        <authorList>
            <person name="Zhou H."/>
            <person name="Di Palma S."/>
            <person name="Preisinger C."/>
            <person name="Peng M."/>
            <person name="Polat A.N."/>
            <person name="Heck A.J."/>
            <person name="Mohammed S."/>
        </authorList>
    </citation>
    <scope>PHOSPHORYLATION [LARGE SCALE ANALYSIS] AT SER-340; SER-790; SER-937; SER-977 AND THR-1010</scope>
    <scope>IDENTIFICATION BY MASS SPECTROMETRY [LARGE SCALE ANALYSIS]</scope>
    <source>
        <tissue>Cervix carcinoma</tissue>
        <tissue>Erythroleukemia</tissue>
    </source>
</reference>
<reference key="10">
    <citation type="journal article" date="2017" name="Nat. Struct. Mol. Biol.">
        <title>Site-specific mapping of the human SUMO proteome reveals co-modification with phosphorylation.</title>
        <authorList>
            <person name="Hendriks I.A."/>
            <person name="Lyon D."/>
            <person name="Young C."/>
            <person name="Jensen L.J."/>
            <person name="Vertegaal A.C."/>
            <person name="Nielsen M.L."/>
        </authorList>
    </citation>
    <scope>SUMOYLATION [LARGE SCALE ANALYSIS] AT LYS-858</scope>
    <scope>IDENTIFICATION BY MASS SPECTROMETRY [LARGE SCALE ANALYSIS]</scope>
</reference>
<evidence type="ECO:0000256" key="1">
    <source>
        <dbReference type="SAM" id="MobiDB-lite"/>
    </source>
</evidence>
<evidence type="ECO:0000305" key="2"/>
<evidence type="ECO:0007744" key="3">
    <source>
    </source>
</evidence>
<evidence type="ECO:0007744" key="4">
    <source>
    </source>
</evidence>
<evidence type="ECO:0007744" key="5">
    <source>
    </source>
</evidence>
<evidence type="ECO:0007744" key="6">
    <source>
    </source>
</evidence>
<keyword id="KW-1017">Isopeptide bond</keyword>
<keyword id="KW-0597">Phosphoprotein</keyword>
<keyword id="KW-1267">Proteomics identification</keyword>
<keyword id="KW-1185">Reference proteome</keyword>
<keyword id="KW-0832">Ubl conjugation</keyword>
<accession>Q9HCM7</accession>
<accession>Q86XQ1</accession>
<gene>
    <name type="primary">FBRSL1</name>
    <name type="synonym">AUTS2L</name>
    <name type="synonym">KIAA1545</name>
    <name type="synonym">XTP9</name>
</gene>
<feature type="chain" id="PRO_0000321962" description="Fibrosin-1-like protein">
    <location>
        <begin position="1"/>
        <end position="1045"/>
    </location>
</feature>
<feature type="region of interest" description="Disordered" evidence="1">
    <location>
        <begin position="1"/>
        <end position="86"/>
    </location>
</feature>
<feature type="region of interest" description="Disordered" evidence="1">
    <location>
        <begin position="99"/>
        <end position="315"/>
    </location>
</feature>
<feature type="region of interest" description="Disordered" evidence="1">
    <location>
        <begin position="443"/>
        <end position="462"/>
    </location>
</feature>
<feature type="region of interest" description="Disordered" evidence="1">
    <location>
        <begin position="719"/>
        <end position="753"/>
    </location>
</feature>
<feature type="region of interest" description="Disordered" evidence="1">
    <location>
        <begin position="809"/>
        <end position="880"/>
    </location>
</feature>
<feature type="region of interest" description="Disordered" evidence="1">
    <location>
        <begin position="910"/>
        <end position="961"/>
    </location>
</feature>
<feature type="region of interest" description="Disordered" evidence="1">
    <location>
        <begin position="991"/>
        <end position="1045"/>
    </location>
</feature>
<feature type="compositionally biased region" description="Basic residues" evidence="1">
    <location>
        <begin position="1"/>
        <end position="12"/>
    </location>
</feature>
<feature type="compositionally biased region" description="Basic and acidic residues" evidence="1">
    <location>
        <begin position="13"/>
        <end position="28"/>
    </location>
</feature>
<feature type="compositionally biased region" description="Low complexity" evidence="1">
    <location>
        <begin position="48"/>
        <end position="63"/>
    </location>
</feature>
<feature type="compositionally biased region" description="Basic and acidic residues" evidence="1">
    <location>
        <begin position="99"/>
        <end position="123"/>
    </location>
</feature>
<feature type="compositionally biased region" description="Polar residues" evidence="1">
    <location>
        <begin position="183"/>
        <end position="197"/>
    </location>
</feature>
<feature type="compositionally biased region" description="Pro residues" evidence="1">
    <location>
        <begin position="270"/>
        <end position="280"/>
    </location>
</feature>
<feature type="compositionally biased region" description="Basic residues" evidence="1">
    <location>
        <begin position="443"/>
        <end position="457"/>
    </location>
</feature>
<feature type="compositionally biased region" description="Pro residues" evidence="1">
    <location>
        <begin position="741"/>
        <end position="750"/>
    </location>
</feature>
<feature type="compositionally biased region" description="Basic and acidic residues" evidence="1">
    <location>
        <begin position="817"/>
        <end position="837"/>
    </location>
</feature>
<feature type="compositionally biased region" description="Low complexity" evidence="1">
    <location>
        <begin position="910"/>
        <end position="922"/>
    </location>
</feature>
<feature type="compositionally biased region" description="Basic and acidic residues" evidence="1">
    <location>
        <begin position="923"/>
        <end position="949"/>
    </location>
</feature>
<feature type="compositionally biased region" description="Pro residues" evidence="1">
    <location>
        <begin position="998"/>
        <end position="1015"/>
    </location>
</feature>
<feature type="compositionally biased region" description="Basic and acidic residues" evidence="1">
    <location>
        <begin position="1029"/>
        <end position="1045"/>
    </location>
</feature>
<feature type="modified residue" description="Phosphoserine" evidence="5">
    <location>
        <position position="340"/>
    </location>
</feature>
<feature type="modified residue" description="Phosphoserine" evidence="5">
    <location>
        <position position="790"/>
    </location>
</feature>
<feature type="modified residue" description="Phosphoserine" evidence="4 5">
    <location>
        <position position="937"/>
    </location>
</feature>
<feature type="modified residue" description="Phosphoserine" evidence="5">
    <location>
        <position position="977"/>
    </location>
</feature>
<feature type="modified residue" description="Phosphothreonine" evidence="3">
    <location>
        <position position="989"/>
    </location>
</feature>
<feature type="modified residue" description="Phosphothreonine" evidence="3 5">
    <location>
        <position position="1010"/>
    </location>
</feature>
<feature type="cross-link" description="Glycyl lysine isopeptide (Lys-Gly) (interchain with G-Cter in SUMO2)" evidence="6">
    <location>
        <position position="858"/>
    </location>
</feature>
<feature type="sequence variant" id="VAR_039390" description="In dbSNP:rs879759065.">
    <original>L</original>
    <variation>P</variation>
    <location>
        <position position="367"/>
    </location>
</feature>
<feature type="sequence conflict" description="In Ref. 3; BAB13371." evidence="2" ref="3">
    <original>A</original>
    <variation>V</variation>
    <location>
        <position position="836"/>
    </location>
</feature>
<comment type="similarity">
    <text evidence="2">Belongs to the AUTS2 family.</text>
</comment>
<comment type="sequence caution" evidence="2">
    <conflict type="erroneous gene model prediction">
        <sequence resource="EMBL-CDS" id="EAW54843"/>
    </conflict>
</comment>